<evidence type="ECO:0000255" key="1">
    <source>
        <dbReference type="PROSITE-ProRule" id="PRU00088"/>
    </source>
</evidence>
<evidence type="ECO:0000269" key="2">
    <source>
    </source>
</evidence>
<evidence type="ECO:0000305" key="3"/>
<reference key="1">
    <citation type="journal article" date="1992" name="Mol. Cell. Biol.">
        <title>Fission yeast pap1-dependent transcription is negatively regulated by an essential nuclear protein, crm1.</title>
        <authorList>
            <person name="Toda T."/>
            <person name="Shimanuki M."/>
            <person name="Saka Y."/>
            <person name="Yamano H."/>
            <person name="Adachi Y."/>
            <person name="Shirakawa M."/>
            <person name="Kyogoku Y."/>
            <person name="Yanagida M."/>
        </authorList>
    </citation>
    <scope>NUCLEOTIDE SEQUENCE [GENOMIC DNA]</scope>
    <scope>PROTEIN SEQUENCE OF 36-56</scope>
</reference>
<reference key="2">
    <citation type="journal article" date="1994" name="J. Biol. Chem.">
        <title>Brefeldin A sensitivity and resistance in Schizosaccharomyces pombe. Isolation of multiple genes conferring resistance.</title>
        <authorList>
            <person name="Turi T.G."/>
            <person name="Webster P."/>
            <person name="Rose J.K."/>
        </authorList>
    </citation>
    <scope>NUCLEOTIDE SEQUENCE [GENOMIC DNA]</scope>
</reference>
<reference key="3">
    <citation type="journal article" date="2002" name="Nature">
        <title>The genome sequence of Schizosaccharomyces pombe.</title>
        <authorList>
            <person name="Wood V."/>
            <person name="Gwilliam R."/>
            <person name="Rajandream M.A."/>
            <person name="Lyne M.H."/>
            <person name="Lyne R."/>
            <person name="Stewart A."/>
            <person name="Sgouros J.G."/>
            <person name="Peat N."/>
            <person name="Hayles J."/>
            <person name="Baker S.G."/>
            <person name="Basham D."/>
            <person name="Bowman S."/>
            <person name="Brooks K."/>
            <person name="Brown D."/>
            <person name="Brown S."/>
            <person name="Chillingworth T."/>
            <person name="Churcher C.M."/>
            <person name="Collins M."/>
            <person name="Connor R."/>
            <person name="Cronin A."/>
            <person name="Davis P."/>
            <person name="Feltwell T."/>
            <person name="Fraser A."/>
            <person name="Gentles S."/>
            <person name="Goble A."/>
            <person name="Hamlin N."/>
            <person name="Harris D.E."/>
            <person name="Hidalgo J."/>
            <person name="Hodgson G."/>
            <person name="Holroyd S."/>
            <person name="Hornsby T."/>
            <person name="Howarth S."/>
            <person name="Huckle E.J."/>
            <person name="Hunt S."/>
            <person name="Jagels K."/>
            <person name="James K.D."/>
            <person name="Jones L."/>
            <person name="Jones M."/>
            <person name="Leather S."/>
            <person name="McDonald S."/>
            <person name="McLean J."/>
            <person name="Mooney P."/>
            <person name="Moule S."/>
            <person name="Mungall K.L."/>
            <person name="Murphy L.D."/>
            <person name="Niblett D."/>
            <person name="Odell C."/>
            <person name="Oliver K."/>
            <person name="O'Neil S."/>
            <person name="Pearson D."/>
            <person name="Quail M.A."/>
            <person name="Rabbinowitsch E."/>
            <person name="Rutherford K.M."/>
            <person name="Rutter S."/>
            <person name="Saunders D."/>
            <person name="Seeger K."/>
            <person name="Sharp S."/>
            <person name="Skelton J."/>
            <person name="Simmonds M.N."/>
            <person name="Squares R."/>
            <person name="Squares S."/>
            <person name="Stevens K."/>
            <person name="Taylor K."/>
            <person name="Taylor R.G."/>
            <person name="Tivey A."/>
            <person name="Walsh S.V."/>
            <person name="Warren T."/>
            <person name="Whitehead S."/>
            <person name="Woodward J.R."/>
            <person name="Volckaert G."/>
            <person name="Aert R."/>
            <person name="Robben J."/>
            <person name="Grymonprez B."/>
            <person name="Weltjens I."/>
            <person name="Vanstreels E."/>
            <person name="Rieger M."/>
            <person name="Schaefer M."/>
            <person name="Mueller-Auer S."/>
            <person name="Gabel C."/>
            <person name="Fuchs M."/>
            <person name="Duesterhoeft A."/>
            <person name="Fritzc C."/>
            <person name="Holzer E."/>
            <person name="Moestl D."/>
            <person name="Hilbert H."/>
            <person name="Borzym K."/>
            <person name="Langer I."/>
            <person name="Beck A."/>
            <person name="Lehrach H."/>
            <person name="Reinhardt R."/>
            <person name="Pohl T.M."/>
            <person name="Eger P."/>
            <person name="Zimmermann W."/>
            <person name="Wedler H."/>
            <person name="Wambutt R."/>
            <person name="Purnelle B."/>
            <person name="Goffeau A."/>
            <person name="Cadieu E."/>
            <person name="Dreano S."/>
            <person name="Gloux S."/>
            <person name="Lelaure V."/>
            <person name="Mottier S."/>
            <person name="Galibert F."/>
            <person name="Aves S.J."/>
            <person name="Xiang Z."/>
            <person name="Hunt C."/>
            <person name="Moore K."/>
            <person name="Hurst S.M."/>
            <person name="Lucas M."/>
            <person name="Rochet M."/>
            <person name="Gaillardin C."/>
            <person name="Tallada V.A."/>
            <person name="Garzon A."/>
            <person name="Thode G."/>
            <person name="Daga R.R."/>
            <person name="Cruzado L."/>
            <person name="Jimenez J."/>
            <person name="Sanchez M."/>
            <person name="del Rey F."/>
            <person name="Benito J."/>
            <person name="Dominguez A."/>
            <person name="Revuelta J.L."/>
            <person name="Moreno S."/>
            <person name="Armstrong J."/>
            <person name="Forsburg S.L."/>
            <person name="Cerutti L."/>
            <person name="Lowe T."/>
            <person name="McCombie W.R."/>
            <person name="Paulsen I."/>
            <person name="Potashkin J."/>
            <person name="Shpakovski G.V."/>
            <person name="Ussery D."/>
            <person name="Barrell B.G."/>
            <person name="Nurse P."/>
        </authorList>
    </citation>
    <scope>NUCLEOTIDE SEQUENCE [LARGE SCALE GENOMIC DNA]</scope>
    <source>
        <strain>972 / ATCC 24843</strain>
    </source>
</reference>
<reference key="4">
    <citation type="journal article" date="2008" name="J. Proteome Res.">
        <title>Phosphoproteome analysis of fission yeast.</title>
        <authorList>
            <person name="Wilson-Grady J.T."/>
            <person name="Villen J."/>
            <person name="Gygi S.P."/>
        </authorList>
    </citation>
    <scope>PHOSPHORYLATION [LARGE SCALE ANALYSIS] AT SER-181</scope>
    <scope>IDENTIFICATION BY MASS SPECTROMETRY</scope>
</reference>
<keyword id="KW-0903">Direct protein sequencing</keyword>
<keyword id="KW-0597">Phosphoprotein</keyword>
<keyword id="KW-1185">Reference proteome</keyword>
<sequence>MSTANTVAIVIYSTYGHVVKLAEAEKAGIEKAGGKAVIYQFPETLSPEILEKMHAAPKPNYPVVTLDVLTQYDAFLFGYPTRYGTPPAQFRTFWDSTGGLWVQGALHGKYFGQFFSTGTLGGGQESTALTAMTSFVHHGMIFVPLGYKNTFSLMANVESIHGGSSWGAGSYAGADGSRNVSDDELEIARIQGETFFKTVFRK</sequence>
<proteinExistence type="evidence at protein level"/>
<gene>
    <name type="primary">obr1</name>
    <name type="ORF">SPAC3C7.14c</name>
</gene>
<dbReference type="EMBL" id="D13038">
    <property type="protein sequence ID" value="BAA02370.1"/>
    <property type="molecule type" value="Genomic_DNA"/>
</dbReference>
<dbReference type="EMBL" id="X73558">
    <property type="protein sequence ID" value="CAA51956.1"/>
    <property type="molecule type" value="Genomic_DNA"/>
</dbReference>
<dbReference type="EMBL" id="CU329670">
    <property type="protein sequence ID" value="CAB16744.1"/>
    <property type="molecule type" value="Genomic_DNA"/>
</dbReference>
<dbReference type="PIR" id="A45029">
    <property type="entry name" value="A45029"/>
</dbReference>
<dbReference type="RefSeq" id="NP_593615.1">
    <property type="nucleotide sequence ID" value="NM_001019046.2"/>
</dbReference>
<dbReference type="SMR" id="P30821"/>
<dbReference type="BioGRID" id="280100">
    <property type="interactions" value="24"/>
</dbReference>
<dbReference type="FunCoup" id="P30821">
    <property type="interactions" value="152"/>
</dbReference>
<dbReference type="IntAct" id="P30821">
    <property type="interactions" value="2"/>
</dbReference>
<dbReference type="MINT" id="P30821"/>
<dbReference type="STRING" id="284812.P30821"/>
<dbReference type="iPTMnet" id="P30821"/>
<dbReference type="PaxDb" id="4896-SPAC3C7.14c.1"/>
<dbReference type="EnsemblFungi" id="SPAC3C7.14c.1">
    <property type="protein sequence ID" value="SPAC3C7.14c.1:pep"/>
    <property type="gene ID" value="SPAC3C7.14c"/>
</dbReference>
<dbReference type="GeneID" id="2543686"/>
<dbReference type="KEGG" id="spo:2543686"/>
<dbReference type="PomBase" id="SPAC3C7.14c">
    <property type="gene designation" value="obr1"/>
</dbReference>
<dbReference type="VEuPathDB" id="FungiDB:SPAC3C7.14c"/>
<dbReference type="eggNOG" id="KOG3135">
    <property type="taxonomic scope" value="Eukaryota"/>
</dbReference>
<dbReference type="HOGENOM" id="CLU_051402_0_1_1"/>
<dbReference type="InParanoid" id="P30821"/>
<dbReference type="OMA" id="SGMFEME"/>
<dbReference type="PhylomeDB" id="P30821"/>
<dbReference type="PRO" id="PR:P30821"/>
<dbReference type="Proteomes" id="UP000002485">
    <property type="component" value="Chromosome I"/>
</dbReference>
<dbReference type="GO" id="GO:0005829">
    <property type="term" value="C:cytosol"/>
    <property type="evidence" value="ECO:0007005"/>
    <property type="project" value="PomBase"/>
</dbReference>
<dbReference type="GO" id="GO:0031934">
    <property type="term" value="C:mating-type region heterochromatin"/>
    <property type="evidence" value="ECO:0000314"/>
    <property type="project" value="PomBase"/>
</dbReference>
<dbReference type="GO" id="GO:0016020">
    <property type="term" value="C:membrane"/>
    <property type="evidence" value="ECO:0000318"/>
    <property type="project" value="GO_Central"/>
</dbReference>
<dbReference type="GO" id="GO:0005634">
    <property type="term" value="C:nucleus"/>
    <property type="evidence" value="ECO:0007005"/>
    <property type="project" value="PomBase"/>
</dbReference>
<dbReference type="GO" id="GO:0010181">
    <property type="term" value="F:FMN binding"/>
    <property type="evidence" value="ECO:0007669"/>
    <property type="project" value="InterPro"/>
</dbReference>
<dbReference type="GO" id="GO:0003955">
    <property type="term" value="F:NAD(P)H dehydrogenase (quinone) activity"/>
    <property type="evidence" value="ECO:0000318"/>
    <property type="project" value="GO_Central"/>
</dbReference>
<dbReference type="FunFam" id="3.40.50.360:FF:000001">
    <property type="entry name" value="NAD(P)H dehydrogenase (Quinone) FQR1-like"/>
    <property type="match status" value="1"/>
</dbReference>
<dbReference type="Gene3D" id="3.40.50.360">
    <property type="match status" value="1"/>
</dbReference>
<dbReference type="InterPro" id="IPR008254">
    <property type="entry name" value="Flavodoxin/NO_synth"/>
</dbReference>
<dbReference type="InterPro" id="IPR029039">
    <property type="entry name" value="Flavoprotein-like_sf"/>
</dbReference>
<dbReference type="InterPro" id="IPR010089">
    <property type="entry name" value="Flavoprotein_WrbA-like"/>
</dbReference>
<dbReference type="InterPro" id="IPR005025">
    <property type="entry name" value="FMN_Rdtase-like_dom"/>
</dbReference>
<dbReference type="NCBIfam" id="TIGR01755">
    <property type="entry name" value="flav_wrbA"/>
    <property type="match status" value="1"/>
</dbReference>
<dbReference type="NCBIfam" id="NF002999">
    <property type="entry name" value="PRK03767.1"/>
    <property type="match status" value="1"/>
</dbReference>
<dbReference type="PANTHER" id="PTHR30546">
    <property type="entry name" value="FLAVODOXIN-RELATED PROTEIN WRBA-RELATED"/>
    <property type="match status" value="1"/>
</dbReference>
<dbReference type="PANTHER" id="PTHR30546:SF23">
    <property type="entry name" value="FLAVOPROTEIN-LIKE PROTEIN YCP4-RELATED"/>
    <property type="match status" value="1"/>
</dbReference>
<dbReference type="Pfam" id="PF03358">
    <property type="entry name" value="FMN_red"/>
    <property type="match status" value="1"/>
</dbReference>
<dbReference type="SUPFAM" id="SSF52218">
    <property type="entry name" value="Flavoproteins"/>
    <property type="match status" value="1"/>
</dbReference>
<dbReference type="PROSITE" id="PS50902">
    <property type="entry name" value="FLAVODOXIN_LIKE"/>
    <property type="match status" value="1"/>
</dbReference>
<protein>
    <recommendedName>
        <fullName>P25 protein</fullName>
    </recommendedName>
    <alternativeName>
        <fullName>Brefeldin A resistance protein</fullName>
    </alternativeName>
</protein>
<name>P25_SCHPO</name>
<organism>
    <name type="scientific">Schizosaccharomyces pombe (strain 972 / ATCC 24843)</name>
    <name type="common">Fission yeast</name>
    <dbReference type="NCBI Taxonomy" id="284812"/>
    <lineage>
        <taxon>Eukaryota</taxon>
        <taxon>Fungi</taxon>
        <taxon>Dikarya</taxon>
        <taxon>Ascomycota</taxon>
        <taxon>Taphrinomycotina</taxon>
        <taxon>Schizosaccharomycetes</taxon>
        <taxon>Schizosaccharomycetales</taxon>
        <taxon>Schizosaccharomycetaceae</taxon>
        <taxon>Schizosaccharomyces</taxon>
    </lineage>
</organism>
<feature type="chain" id="PRO_0000200766" description="P25 protein">
    <location>
        <begin position="1"/>
        <end position="202"/>
    </location>
</feature>
<feature type="domain" description="Flavodoxin-like" evidence="1">
    <location>
        <begin position="7"/>
        <end position="195"/>
    </location>
</feature>
<feature type="modified residue" description="Phosphoserine" evidence="2">
    <location>
        <position position="181"/>
    </location>
</feature>
<comment type="function">
    <text>Unknown. Target of pap1 transcription factor. Confers brefeldin A resistance in S.pombe.</text>
</comment>
<comment type="subunit">
    <text>Homodimer.</text>
</comment>
<comment type="similarity">
    <text evidence="3">Belongs to the WrbA family.</text>
</comment>
<accession>P30821</accession>